<protein>
    <recommendedName>
        <fullName evidence="1">Adenylate kinase</fullName>
        <shortName evidence="1">AK</shortName>
        <ecNumber evidence="1">2.7.4.3</ecNumber>
    </recommendedName>
    <alternativeName>
        <fullName evidence="1">ATP-AMP transphosphorylase</fullName>
    </alternativeName>
    <alternativeName>
        <fullName evidence="1">ATP:AMP phosphotransferase</fullName>
    </alternativeName>
    <alternativeName>
        <fullName evidence="1">Adenylate monophosphate kinase</fullName>
    </alternativeName>
</protein>
<feature type="chain" id="PRO_1000058941" description="Adenylate kinase">
    <location>
        <begin position="1"/>
        <end position="214"/>
    </location>
</feature>
<feature type="region of interest" description="NMP" evidence="1">
    <location>
        <begin position="30"/>
        <end position="59"/>
    </location>
</feature>
<feature type="region of interest" description="LID">
    <location>
        <begin position="122"/>
        <end position="159"/>
    </location>
</feature>
<feature type="binding site" evidence="1">
    <location>
        <begin position="10"/>
        <end position="15"/>
    </location>
    <ligand>
        <name>ATP</name>
        <dbReference type="ChEBI" id="CHEBI:30616"/>
    </ligand>
</feature>
<feature type="binding site" evidence="1">
    <location>
        <position position="31"/>
    </location>
    <ligand>
        <name>AMP</name>
        <dbReference type="ChEBI" id="CHEBI:456215"/>
    </ligand>
</feature>
<feature type="binding site" evidence="1">
    <location>
        <position position="36"/>
    </location>
    <ligand>
        <name>AMP</name>
        <dbReference type="ChEBI" id="CHEBI:456215"/>
    </ligand>
</feature>
<feature type="binding site" evidence="1">
    <location>
        <begin position="57"/>
        <end position="59"/>
    </location>
    <ligand>
        <name>AMP</name>
        <dbReference type="ChEBI" id="CHEBI:456215"/>
    </ligand>
</feature>
<feature type="binding site" evidence="1">
    <location>
        <begin position="85"/>
        <end position="88"/>
    </location>
    <ligand>
        <name>AMP</name>
        <dbReference type="ChEBI" id="CHEBI:456215"/>
    </ligand>
</feature>
<feature type="binding site" evidence="1">
    <location>
        <position position="92"/>
    </location>
    <ligand>
        <name>AMP</name>
        <dbReference type="ChEBI" id="CHEBI:456215"/>
    </ligand>
</feature>
<feature type="binding site" evidence="1">
    <location>
        <position position="123"/>
    </location>
    <ligand>
        <name>ATP</name>
        <dbReference type="ChEBI" id="CHEBI:30616"/>
    </ligand>
</feature>
<feature type="binding site" evidence="1">
    <location>
        <begin position="132"/>
        <end position="133"/>
    </location>
    <ligand>
        <name>ATP</name>
        <dbReference type="ChEBI" id="CHEBI:30616"/>
    </ligand>
</feature>
<feature type="binding site" evidence="1">
    <location>
        <position position="156"/>
    </location>
    <ligand>
        <name>AMP</name>
        <dbReference type="ChEBI" id="CHEBI:456215"/>
    </ligand>
</feature>
<feature type="binding site" evidence="1">
    <location>
        <position position="167"/>
    </location>
    <ligand>
        <name>AMP</name>
        <dbReference type="ChEBI" id="CHEBI:456215"/>
    </ligand>
</feature>
<feature type="binding site" evidence="1">
    <location>
        <position position="200"/>
    </location>
    <ligand>
        <name>ATP</name>
        <dbReference type="ChEBI" id="CHEBI:30616"/>
    </ligand>
</feature>
<dbReference type="EC" id="2.7.4.3" evidence="1"/>
<dbReference type="EMBL" id="CP000720">
    <property type="protein sequence ID" value="ABS47233.1"/>
    <property type="molecule type" value="Genomic_DNA"/>
</dbReference>
<dbReference type="RefSeq" id="WP_002208600.1">
    <property type="nucleotide sequence ID" value="NC_009708.1"/>
</dbReference>
<dbReference type="SMR" id="A7FL86"/>
<dbReference type="GeneID" id="57975593"/>
<dbReference type="KEGG" id="ypi:YpsIP31758_3054"/>
<dbReference type="HOGENOM" id="CLU_032354_1_2_6"/>
<dbReference type="UniPathway" id="UPA00588">
    <property type="reaction ID" value="UER00649"/>
</dbReference>
<dbReference type="Proteomes" id="UP000002412">
    <property type="component" value="Chromosome"/>
</dbReference>
<dbReference type="GO" id="GO:0005737">
    <property type="term" value="C:cytoplasm"/>
    <property type="evidence" value="ECO:0007669"/>
    <property type="project" value="UniProtKB-SubCell"/>
</dbReference>
<dbReference type="GO" id="GO:0004017">
    <property type="term" value="F:adenylate kinase activity"/>
    <property type="evidence" value="ECO:0007669"/>
    <property type="project" value="UniProtKB-UniRule"/>
</dbReference>
<dbReference type="GO" id="GO:0005524">
    <property type="term" value="F:ATP binding"/>
    <property type="evidence" value="ECO:0007669"/>
    <property type="project" value="UniProtKB-UniRule"/>
</dbReference>
<dbReference type="GO" id="GO:0044209">
    <property type="term" value="P:AMP salvage"/>
    <property type="evidence" value="ECO:0007669"/>
    <property type="project" value="UniProtKB-UniRule"/>
</dbReference>
<dbReference type="CDD" id="cd01428">
    <property type="entry name" value="ADK"/>
    <property type="match status" value="1"/>
</dbReference>
<dbReference type="FunFam" id="3.40.50.300:FF:000106">
    <property type="entry name" value="Adenylate kinase mitochondrial"/>
    <property type="match status" value="1"/>
</dbReference>
<dbReference type="Gene3D" id="3.40.50.300">
    <property type="entry name" value="P-loop containing nucleotide triphosphate hydrolases"/>
    <property type="match status" value="1"/>
</dbReference>
<dbReference type="HAMAP" id="MF_00235">
    <property type="entry name" value="Adenylate_kinase_Adk"/>
    <property type="match status" value="1"/>
</dbReference>
<dbReference type="InterPro" id="IPR006259">
    <property type="entry name" value="Adenyl_kin_sub"/>
</dbReference>
<dbReference type="InterPro" id="IPR000850">
    <property type="entry name" value="Adenylat/UMP-CMP_kin"/>
</dbReference>
<dbReference type="InterPro" id="IPR033690">
    <property type="entry name" value="Adenylat_kinase_CS"/>
</dbReference>
<dbReference type="InterPro" id="IPR007862">
    <property type="entry name" value="Adenylate_kinase_lid-dom"/>
</dbReference>
<dbReference type="InterPro" id="IPR027417">
    <property type="entry name" value="P-loop_NTPase"/>
</dbReference>
<dbReference type="NCBIfam" id="TIGR01351">
    <property type="entry name" value="adk"/>
    <property type="match status" value="1"/>
</dbReference>
<dbReference type="NCBIfam" id="NF001379">
    <property type="entry name" value="PRK00279.1-1"/>
    <property type="match status" value="1"/>
</dbReference>
<dbReference type="NCBIfam" id="NF001380">
    <property type="entry name" value="PRK00279.1-2"/>
    <property type="match status" value="1"/>
</dbReference>
<dbReference type="NCBIfam" id="NF001381">
    <property type="entry name" value="PRK00279.1-3"/>
    <property type="match status" value="1"/>
</dbReference>
<dbReference type="NCBIfam" id="NF011100">
    <property type="entry name" value="PRK14527.1"/>
    <property type="match status" value="1"/>
</dbReference>
<dbReference type="PANTHER" id="PTHR23359">
    <property type="entry name" value="NUCLEOTIDE KINASE"/>
    <property type="match status" value="1"/>
</dbReference>
<dbReference type="Pfam" id="PF00406">
    <property type="entry name" value="ADK"/>
    <property type="match status" value="1"/>
</dbReference>
<dbReference type="Pfam" id="PF05191">
    <property type="entry name" value="ADK_lid"/>
    <property type="match status" value="1"/>
</dbReference>
<dbReference type="PRINTS" id="PR00094">
    <property type="entry name" value="ADENYLTKNASE"/>
</dbReference>
<dbReference type="SUPFAM" id="SSF52540">
    <property type="entry name" value="P-loop containing nucleoside triphosphate hydrolases"/>
    <property type="match status" value="1"/>
</dbReference>
<dbReference type="PROSITE" id="PS00113">
    <property type="entry name" value="ADENYLATE_KINASE"/>
    <property type="match status" value="1"/>
</dbReference>
<reference key="1">
    <citation type="journal article" date="2007" name="PLoS Genet.">
        <title>The complete genome sequence of Yersinia pseudotuberculosis IP31758, the causative agent of Far East scarlet-like fever.</title>
        <authorList>
            <person name="Eppinger M."/>
            <person name="Rosovitz M.J."/>
            <person name="Fricke W.F."/>
            <person name="Rasko D.A."/>
            <person name="Kokorina G."/>
            <person name="Fayolle C."/>
            <person name="Lindler L.E."/>
            <person name="Carniel E."/>
            <person name="Ravel J."/>
        </authorList>
    </citation>
    <scope>NUCLEOTIDE SEQUENCE [LARGE SCALE GENOMIC DNA]</scope>
    <source>
        <strain>IP 31758</strain>
    </source>
</reference>
<gene>
    <name evidence="1" type="primary">adk</name>
    <name type="ordered locus">YpsIP31758_3054</name>
</gene>
<organism>
    <name type="scientific">Yersinia pseudotuberculosis serotype O:1b (strain IP 31758)</name>
    <dbReference type="NCBI Taxonomy" id="349747"/>
    <lineage>
        <taxon>Bacteria</taxon>
        <taxon>Pseudomonadati</taxon>
        <taxon>Pseudomonadota</taxon>
        <taxon>Gammaproteobacteria</taxon>
        <taxon>Enterobacterales</taxon>
        <taxon>Yersiniaceae</taxon>
        <taxon>Yersinia</taxon>
    </lineage>
</organism>
<proteinExistence type="inferred from homology"/>
<accession>A7FL86</accession>
<sequence length="214" mass="23672">MRIILLGAPGAGKGTQAQFIMEKYGIPQISTGDMLRAAVKAGSELGLKAKEIMDAGKLVTDELVIALVKERITQEDCRDGFLLDGFPRTIPQADAMKEAGIKVDYVLEFDVPDELIVERIVGRRVHAASGRVYHVKFNPPKVEDKDDVTGEELTIRKDDQEATVRKRLIEYHQQTAPLVSYYHKEADAGNTQYFKLDGTRNVAEVSAELATILG</sequence>
<comment type="function">
    <text evidence="1">Catalyzes the reversible transfer of the terminal phosphate group between ATP and AMP. Plays an important role in cellular energy homeostasis and in adenine nucleotide metabolism.</text>
</comment>
<comment type="catalytic activity">
    <reaction evidence="1">
        <text>AMP + ATP = 2 ADP</text>
        <dbReference type="Rhea" id="RHEA:12973"/>
        <dbReference type="ChEBI" id="CHEBI:30616"/>
        <dbReference type="ChEBI" id="CHEBI:456215"/>
        <dbReference type="ChEBI" id="CHEBI:456216"/>
        <dbReference type="EC" id="2.7.4.3"/>
    </reaction>
</comment>
<comment type="pathway">
    <text evidence="1">Purine metabolism; AMP biosynthesis via salvage pathway; AMP from ADP: step 1/1.</text>
</comment>
<comment type="subunit">
    <text evidence="1">Monomer.</text>
</comment>
<comment type="subcellular location">
    <subcellularLocation>
        <location evidence="1">Cytoplasm</location>
    </subcellularLocation>
</comment>
<comment type="domain">
    <text evidence="1">Consists of three domains, a large central CORE domain and two small peripheral domains, NMPbind and LID, which undergo movements during catalysis. The LID domain closes over the site of phosphoryl transfer upon ATP binding. Assembling and dissambling the active center during each catalytic cycle provides an effective means to prevent ATP hydrolysis.</text>
</comment>
<comment type="similarity">
    <text evidence="1">Belongs to the adenylate kinase family.</text>
</comment>
<name>KAD_YERP3</name>
<keyword id="KW-0067">ATP-binding</keyword>
<keyword id="KW-0963">Cytoplasm</keyword>
<keyword id="KW-0418">Kinase</keyword>
<keyword id="KW-0545">Nucleotide biosynthesis</keyword>
<keyword id="KW-0547">Nucleotide-binding</keyword>
<keyword id="KW-0808">Transferase</keyword>
<evidence type="ECO:0000255" key="1">
    <source>
        <dbReference type="HAMAP-Rule" id="MF_00235"/>
    </source>
</evidence>